<sequence>MMNESLTEKRNELSLSFAALGVVFGDIGTSPLYAFGQVIKYFPINDHNIYGILSLIFWSLIIIVSIKYLVIVFRADNDGEGGIIALAGVIRQKIKQPGGWLLFITLVGIGLIIGDGMLTPAISILSAVEGLESLSPNLAKYVLPVTLIILFFLFKMQSIGTGKIGVYFAPVMLVWFITIGILGFLQIIQNPKVLMAINPYYAINFFMIHKYLALFILGGVFLVMTGGEALFADLGHFGKKAIRTGWFAVALPALLLCYFGQGALVLMHTEDIKYPFFSLSPDWFLPVMIILATLATIIASQAIISAAFSILKQASLLNLIPRLKIVFTSKFEKGEVYLPLINFILALGTCSLVVIFKSSSNLADAYGIAVNLDMLITTVLVGIIAYRCWSWHAFKILIFLLILIIELAFFAGNIPKLLTGGWIPILIAFLGFVVMYTWHCGFEKLRELHHRDALMDAFIIDELNQNKISRQPGMGLYIIDPYDCEGESLLHHLRLNRIFFENMVFVSIKIENKPYIPIEDKFELIKKAEGFYLIFIHYGFTENINLPNELDEMFKRVYLPFDVIKNKLIYFIEIVFVEMTGERQKHMYLWQKHFFSLMIRNAVPDIQFYQLPYNNTIAIGTYYQF</sequence>
<dbReference type="EMBL" id="CP000675">
    <property type="protein sequence ID" value="ABQ55515.1"/>
    <property type="molecule type" value="Genomic_DNA"/>
</dbReference>
<dbReference type="RefSeq" id="WP_011946975.1">
    <property type="nucleotide sequence ID" value="NC_009494.2"/>
</dbReference>
<dbReference type="KEGG" id="lpc:LPC_1572"/>
<dbReference type="HOGENOM" id="CLU_008142_4_2_6"/>
<dbReference type="GO" id="GO:0005886">
    <property type="term" value="C:plasma membrane"/>
    <property type="evidence" value="ECO:0007669"/>
    <property type="project" value="UniProtKB-SubCell"/>
</dbReference>
<dbReference type="GO" id="GO:0015079">
    <property type="term" value="F:potassium ion transmembrane transporter activity"/>
    <property type="evidence" value="ECO:0007669"/>
    <property type="project" value="UniProtKB-UniRule"/>
</dbReference>
<dbReference type="GO" id="GO:0015293">
    <property type="term" value="F:symporter activity"/>
    <property type="evidence" value="ECO:0007669"/>
    <property type="project" value="UniProtKB-UniRule"/>
</dbReference>
<dbReference type="HAMAP" id="MF_01522">
    <property type="entry name" value="Kup"/>
    <property type="match status" value="1"/>
</dbReference>
<dbReference type="InterPro" id="IPR003855">
    <property type="entry name" value="K+_transporter"/>
</dbReference>
<dbReference type="InterPro" id="IPR053952">
    <property type="entry name" value="K_trans_C"/>
</dbReference>
<dbReference type="InterPro" id="IPR053951">
    <property type="entry name" value="K_trans_N"/>
</dbReference>
<dbReference type="InterPro" id="IPR023051">
    <property type="entry name" value="Kup"/>
</dbReference>
<dbReference type="PANTHER" id="PTHR30540:SF83">
    <property type="entry name" value="K+ POTASSIUM TRANSPORTER"/>
    <property type="match status" value="1"/>
</dbReference>
<dbReference type="PANTHER" id="PTHR30540">
    <property type="entry name" value="OSMOTIC STRESS POTASSIUM TRANSPORTER"/>
    <property type="match status" value="1"/>
</dbReference>
<dbReference type="Pfam" id="PF02705">
    <property type="entry name" value="K_trans"/>
    <property type="match status" value="1"/>
</dbReference>
<dbReference type="Pfam" id="PF22776">
    <property type="entry name" value="K_trans_C"/>
    <property type="match status" value="1"/>
</dbReference>
<proteinExistence type="inferred from homology"/>
<accession>A5IDR5</accession>
<comment type="function">
    <text evidence="1">Transport of potassium into the cell. Likely operates as a K(+):H(+) symporter.</text>
</comment>
<comment type="catalytic activity">
    <reaction evidence="1">
        <text>K(+)(in) + H(+)(in) = K(+)(out) + H(+)(out)</text>
        <dbReference type="Rhea" id="RHEA:28490"/>
        <dbReference type="ChEBI" id="CHEBI:15378"/>
        <dbReference type="ChEBI" id="CHEBI:29103"/>
    </reaction>
    <physiologicalReaction direction="right-to-left" evidence="1">
        <dbReference type="Rhea" id="RHEA:28492"/>
    </physiologicalReaction>
</comment>
<comment type="subcellular location">
    <subcellularLocation>
        <location evidence="1">Cell inner membrane</location>
        <topology evidence="1">Multi-pass membrane protein</topology>
    </subcellularLocation>
</comment>
<comment type="similarity">
    <text evidence="1">Belongs to the HAK/KUP transporter (TC 2.A.72) family.</text>
</comment>
<evidence type="ECO:0000255" key="1">
    <source>
        <dbReference type="HAMAP-Rule" id="MF_01522"/>
    </source>
</evidence>
<reference key="1">
    <citation type="submission" date="2006-11" db="EMBL/GenBank/DDBJ databases">
        <title>Identification and characterization of a new conjugation/ type IVA secretion system (trb/tra) of L. pneumophila Corby localized on a mobile genomic island.</title>
        <authorList>
            <person name="Gloeckner G."/>
            <person name="Albert-Weissenberger C."/>
            <person name="Weinmann E."/>
            <person name="Jacobi S."/>
            <person name="Schunder E."/>
            <person name="Steinert M."/>
            <person name="Buchrieser C."/>
            <person name="Hacker J."/>
            <person name="Heuner K."/>
        </authorList>
    </citation>
    <scope>NUCLEOTIDE SEQUENCE [LARGE SCALE GENOMIC DNA]</scope>
    <source>
        <strain>Corby</strain>
    </source>
</reference>
<protein>
    <recommendedName>
        <fullName evidence="1">Probable potassium transport system protein Kup 2</fullName>
    </recommendedName>
</protein>
<gene>
    <name evidence="1" type="primary">kup2</name>
    <name type="ordered locus">LPC_1572</name>
</gene>
<feature type="chain" id="PRO_0000315986" description="Probable potassium transport system protein Kup 2">
    <location>
        <begin position="1"/>
        <end position="625"/>
    </location>
</feature>
<feature type="transmembrane region" description="Helical" evidence="1">
    <location>
        <begin position="15"/>
        <end position="35"/>
    </location>
</feature>
<feature type="transmembrane region" description="Helical" evidence="1">
    <location>
        <begin position="52"/>
        <end position="72"/>
    </location>
</feature>
<feature type="transmembrane region" description="Helical" evidence="1">
    <location>
        <begin position="98"/>
        <end position="118"/>
    </location>
</feature>
<feature type="transmembrane region" description="Helical" evidence="1">
    <location>
        <begin position="134"/>
        <end position="154"/>
    </location>
</feature>
<feature type="transmembrane region" description="Helical" evidence="1">
    <location>
        <begin position="164"/>
        <end position="184"/>
    </location>
</feature>
<feature type="transmembrane region" description="Helical" evidence="1">
    <location>
        <begin position="212"/>
        <end position="232"/>
    </location>
</feature>
<feature type="transmembrane region" description="Helical" evidence="1">
    <location>
        <begin position="246"/>
        <end position="266"/>
    </location>
</feature>
<feature type="transmembrane region" description="Helical" evidence="1">
    <location>
        <begin position="284"/>
        <end position="304"/>
    </location>
</feature>
<feature type="transmembrane region" description="Helical" evidence="1">
    <location>
        <begin position="336"/>
        <end position="356"/>
    </location>
</feature>
<feature type="transmembrane region" description="Helical" evidence="1">
    <location>
        <begin position="365"/>
        <end position="385"/>
    </location>
</feature>
<feature type="transmembrane region" description="Helical" evidence="1">
    <location>
        <begin position="394"/>
        <end position="414"/>
    </location>
</feature>
<feature type="transmembrane region" description="Helical" evidence="1">
    <location>
        <begin position="417"/>
        <end position="437"/>
    </location>
</feature>
<keyword id="KW-0997">Cell inner membrane</keyword>
<keyword id="KW-1003">Cell membrane</keyword>
<keyword id="KW-0406">Ion transport</keyword>
<keyword id="KW-0472">Membrane</keyword>
<keyword id="KW-0630">Potassium</keyword>
<keyword id="KW-0633">Potassium transport</keyword>
<keyword id="KW-0769">Symport</keyword>
<keyword id="KW-0812">Transmembrane</keyword>
<keyword id="KW-1133">Transmembrane helix</keyword>
<keyword id="KW-0813">Transport</keyword>
<name>KUP2_LEGPC</name>
<organism>
    <name type="scientific">Legionella pneumophila (strain Corby)</name>
    <dbReference type="NCBI Taxonomy" id="400673"/>
    <lineage>
        <taxon>Bacteria</taxon>
        <taxon>Pseudomonadati</taxon>
        <taxon>Pseudomonadota</taxon>
        <taxon>Gammaproteobacteria</taxon>
        <taxon>Legionellales</taxon>
        <taxon>Legionellaceae</taxon>
        <taxon>Legionella</taxon>
    </lineage>
</organism>